<comment type="function">
    <text evidence="1">May play a role in DNA repair. It seems to be involved in an RecBC-independent recombinational process of DNA repair. It may act with RecF and RecO.</text>
</comment>
<comment type="similarity">
    <text evidence="1">Belongs to the RecR family.</text>
</comment>
<evidence type="ECO:0000255" key="1">
    <source>
        <dbReference type="HAMAP-Rule" id="MF_00017"/>
    </source>
</evidence>
<organism>
    <name type="scientific">Streptococcus pneumoniae (strain P1031)</name>
    <dbReference type="NCBI Taxonomy" id="488223"/>
    <lineage>
        <taxon>Bacteria</taxon>
        <taxon>Bacillati</taxon>
        <taxon>Bacillota</taxon>
        <taxon>Bacilli</taxon>
        <taxon>Lactobacillales</taxon>
        <taxon>Streptococcaceae</taxon>
        <taxon>Streptococcus</taxon>
    </lineage>
</organism>
<proteinExistence type="inferred from homology"/>
<reference key="1">
    <citation type="journal article" date="2010" name="Genome Biol.">
        <title>Structure and dynamics of the pan-genome of Streptococcus pneumoniae and closely related species.</title>
        <authorList>
            <person name="Donati C."/>
            <person name="Hiller N.L."/>
            <person name="Tettelin H."/>
            <person name="Muzzi A."/>
            <person name="Croucher N.J."/>
            <person name="Angiuoli S.V."/>
            <person name="Oggioni M."/>
            <person name="Dunning Hotopp J.C."/>
            <person name="Hu F.Z."/>
            <person name="Riley D.R."/>
            <person name="Covacci A."/>
            <person name="Mitchell T.J."/>
            <person name="Bentley S.D."/>
            <person name="Kilian M."/>
            <person name="Ehrlich G.D."/>
            <person name="Rappuoli R."/>
            <person name="Moxon E.R."/>
            <person name="Masignani V."/>
        </authorList>
    </citation>
    <scope>NUCLEOTIDE SEQUENCE [LARGE SCALE GENOMIC DNA]</scope>
    <source>
        <strain>P1031</strain>
    </source>
</reference>
<sequence length="198" mass="21689">MLYPTPIAKLIDSYSKLPGIGIKTATRLAFYTIGMSADDVNEFAKNLLSAKRELTYCSICGRLTDDDPCSICTDPTRDQTTILVLEDSRDVAAMENIQEYHGLYHVLHGLISPMNGISPDDINLKSLMTRLMDSEVSEVIVATNATADGEATSMYLSRLLKPAGIKVTRLARGLAVGADIEYADEVTLLRAIENRTEL</sequence>
<name>RECR_STRZP</name>
<feature type="chain" id="PRO_1000195414" description="Recombination protein RecR">
    <location>
        <begin position="1"/>
        <end position="198"/>
    </location>
</feature>
<feature type="domain" description="Toprim" evidence="1">
    <location>
        <begin position="80"/>
        <end position="175"/>
    </location>
</feature>
<feature type="zinc finger region" description="C4-type" evidence="1">
    <location>
        <begin position="57"/>
        <end position="72"/>
    </location>
</feature>
<dbReference type="EMBL" id="CP000920">
    <property type="protein sequence ID" value="ACO21373.1"/>
    <property type="molecule type" value="Genomic_DNA"/>
</dbReference>
<dbReference type="RefSeq" id="WP_000966743.1">
    <property type="nucleotide sequence ID" value="NC_012467.1"/>
</dbReference>
<dbReference type="SMR" id="C1CM11"/>
<dbReference type="GeneID" id="45653117"/>
<dbReference type="KEGG" id="spp:SPP_1690"/>
<dbReference type="HOGENOM" id="CLU_060739_1_0_9"/>
<dbReference type="GO" id="GO:0003677">
    <property type="term" value="F:DNA binding"/>
    <property type="evidence" value="ECO:0007669"/>
    <property type="project" value="UniProtKB-UniRule"/>
</dbReference>
<dbReference type="GO" id="GO:0008270">
    <property type="term" value="F:zinc ion binding"/>
    <property type="evidence" value="ECO:0007669"/>
    <property type="project" value="UniProtKB-KW"/>
</dbReference>
<dbReference type="GO" id="GO:0006310">
    <property type="term" value="P:DNA recombination"/>
    <property type="evidence" value="ECO:0007669"/>
    <property type="project" value="UniProtKB-UniRule"/>
</dbReference>
<dbReference type="GO" id="GO:0006281">
    <property type="term" value="P:DNA repair"/>
    <property type="evidence" value="ECO:0007669"/>
    <property type="project" value="UniProtKB-UniRule"/>
</dbReference>
<dbReference type="CDD" id="cd01025">
    <property type="entry name" value="TOPRIM_recR"/>
    <property type="match status" value="1"/>
</dbReference>
<dbReference type="Gene3D" id="3.30.60.80">
    <property type="match status" value="1"/>
</dbReference>
<dbReference type="Gene3D" id="3.40.1360.10">
    <property type="match status" value="1"/>
</dbReference>
<dbReference type="Gene3D" id="6.10.250.240">
    <property type="match status" value="1"/>
</dbReference>
<dbReference type="Gene3D" id="1.10.8.420">
    <property type="entry name" value="RecR Domain 1"/>
    <property type="match status" value="1"/>
</dbReference>
<dbReference type="HAMAP" id="MF_00017">
    <property type="entry name" value="RecR"/>
    <property type="match status" value="1"/>
</dbReference>
<dbReference type="InterPro" id="IPR000093">
    <property type="entry name" value="DNA_Rcmb_RecR"/>
</dbReference>
<dbReference type="InterPro" id="IPR023627">
    <property type="entry name" value="Rcmb_RecR"/>
</dbReference>
<dbReference type="InterPro" id="IPR015967">
    <property type="entry name" value="Rcmb_RecR_Znf"/>
</dbReference>
<dbReference type="InterPro" id="IPR006171">
    <property type="entry name" value="TOPRIM_dom"/>
</dbReference>
<dbReference type="InterPro" id="IPR034137">
    <property type="entry name" value="TOPRIM_RecR"/>
</dbReference>
<dbReference type="NCBIfam" id="TIGR00615">
    <property type="entry name" value="recR"/>
    <property type="match status" value="1"/>
</dbReference>
<dbReference type="PANTHER" id="PTHR30446">
    <property type="entry name" value="RECOMBINATION PROTEIN RECR"/>
    <property type="match status" value="1"/>
</dbReference>
<dbReference type="PANTHER" id="PTHR30446:SF0">
    <property type="entry name" value="RECOMBINATION PROTEIN RECR"/>
    <property type="match status" value="1"/>
</dbReference>
<dbReference type="Pfam" id="PF21175">
    <property type="entry name" value="RecR_C"/>
    <property type="match status" value="1"/>
</dbReference>
<dbReference type="Pfam" id="PF21176">
    <property type="entry name" value="RecR_HhH"/>
    <property type="match status" value="1"/>
</dbReference>
<dbReference type="Pfam" id="PF02132">
    <property type="entry name" value="RecR_ZnF"/>
    <property type="match status" value="1"/>
</dbReference>
<dbReference type="Pfam" id="PF13662">
    <property type="entry name" value="Toprim_4"/>
    <property type="match status" value="1"/>
</dbReference>
<dbReference type="SMART" id="SM00493">
    <property type="entry name" value="TOPRIM"/>
    <property type="match status" value="1"/>
</dbReference>
<dbReference type="SUPFAM" id="SSF111304">
    <property type="entry name" value="Recombination protein RecR"/>
    <property type="match status" value="1"/>
</dbReference>
<dbReference type="PROSITE" id="PS01300">
    <property type="entry name" value="RECR"/>
    <property type="match status" value="1"/>
</dbReference>
<dbReference type="PROSITE" id="PS50880">
    <property type="entry name" value="TOPRIM"/>
    <property type="match status" value="1"/>
</dbReference>
<protein>
    <recommendedName>
        <fullName evidence="1">Recombination protein RecR</fullName>
    </recommendedName>
</protein>
<accession>C1CM11</accession>
<gene>
    <name evidence="1" type="primary">recR</name>
    <name type="ordered locus">SPP_1690</name>
</gene>
<keyword id="KW-0227">DNA damage</keyword>
<keyword id="KW-0233">DNA recombination</keyword>
<keyword id="KW-0234">DNA repair</keyword>
<keyword id="KW-0479">Metal-binding</keyword>
<keyword id="KW-0862">Zinc</keyword>
<keyword id="KW-0863">Zinc-finger</keyword>